<sequence length="200" mass="22514">MALGGWRWARKALAAGRPLFQGRALLLTNTLGCGVLMAAGDGARQVWEVRARPGQRFSARRSASMFAVGCSMGPFLHFWYLWLDRLLPASGLRSLPSVMKKVLVDQTVASPILGVWYFLGLGSLEGQTLEESCQELRAKFWDFYKADWCVWPAAQLVNFLFIPSHFRVTYINGLTLGWDTYLSYLKYWVPEPLQTPGCAD</sequence>
<evidence type="ECO:0000250" key="1">
    <source>
        <dbReference type="UniProtKB" id="Q567V2"/>
    </source>
</evidence>
<evidence type="ECO:0000255" key="2"/>
<evidence type="ECO:0000305" key="3"/>
<comment type="function">
    <text evidence="1">Required for the assembly and stability of the mitochondrial ribosome (By similarity). Is a positive regulator of mitochondrial protein synthesis (By similarity).</text>
</comment>
<comment type="subunit">
    <text evidence="1">Interacts with the large mitochondrial ribosomal subunit.</text>
</comment>
<comment type="subcellular location">
    <subcellularLocation>
        <location evidence="3">Membrane</location>
        <topology evidence="3">Multi-pass membrane protein</topology>
    </subcellularLocation>
    <subcellularLocation>
        <location evidence="1">Mitochondrion inner membrane</location>
    </subcellularLocation>
</comment>
<comment type="similarity">
    <text evidence="3">Belongs to the peroxisomal membrane protein PXMP2/4 family.</text>
</comment>
<protein>
    <recommendedName>
        <fullName>Mpv17-like protein 2</fullName>
    </recommendedName>
</protein>
<feature type="chain" id="PRO_0000317622" description="Mpv17-like protein 2">
    <location>
        <begin position="1"/>
        <end position="200"/>
    </location>
</feature>
<feature type="transmembrane region" description="Helical" evidence="2">
    <location>
        <begin position="24"/>
        <end position="40"/>
    </location>
</feature>
<feature type="transmembrane region" description="Helical" evidence="2">
    <location>
        <begin position="63"/>
        <end position="83"/>
    </location>
</feature>
<feature type="transmembrane region" description="Helical" evidence="2">
    <location>
        <begin position="102"/>
        <end position="122"/>
    </location>
</feature>
<feature type="sequence conflict" description="In Ref. 2; BAE40224." evidence="3" ref="2">
    <original>Q</original>
    <variation>R</variation>
    <location>
        <position position="106"/>
    </location>
</feature>
<feature type="sequence conflict" description="In Ref. 3; AAH51227." evidence="3" ref="3">
    <original>Q</original>
    <variation>H</variation>
    <location>
        <position position="127"/>
    </location>
</feature>
<keyword id="KW-0472">Membrane</keyword>
<keyword id="KW-0496">Mitochondrion</keyword>
<keyword id="KW-0999">Mitochondrion inner membrane</keyword>
<keyword id="KW-1185">Reference proteome</keyword>
<keyword id="KW-0812">Transmembrane</keyword>
<keyword id="KW-1133">Transmembrane helix</keyword>
<reference key="1">
    <citation type="submission" date="2000-11" db="EMBL/GenBank/DDBJ databases">
        <title>Characterization of FKSG24, a novel gene located on human chromosome 19.</title>
        <authorList>
            <person name="Wang Y.-G."/>
            <person name="Gong L."/>
        </authorList>
    </citation>
    <scope>NUCLEOTIDE SEQUENCE [MRNA]</scope>
    <source>
        <strain>C57BL/6J</strain>
    </source>
</reference>
<reference key="2">
    <citation type="journal article" date="2005" name="Science">
        <title>The transcriptional landscape of the mammalian genome.</title>
        <authorList>
            <person name="Carninci P."/>
            <person name="Kasukawa T."/>
            <person name="Katayama S."/>
            <person name="Gough J."/>
            <person name="Frith M.C."/>
            <person name="Maeda N."/>
            <person name="Oyama R."/>
            <person name="Ravasi T."/>
            <person name="Lenhard B."/>
            <person name="Wells C."/>
            <person name="Kodzius R."/>
            <person name="Shimokawa K."/>
            <person name="Bajic V.B."/>
            <person name="Brenner S.E."/>
            <person name="Batalov S."/>
            <person name="Forrest A.R."/>
            <person name="Zavolan M."/>
            <person name="Davis M.J."/>
            <person name="Wilming L.G."/>
            <person name="Aidinis V."/>
            <person name="Allen J.E."/>
            <person name="Ambesi-Impiombato A."/>
            <person name="Apweiler R."/>
            <person name="Aturaliya R.N."/>
            <person name="Bailey T.L."/>
            <person name="Bansal M."/>
            <person name="Baxter L."/>
            <person name="Beisel K.W."/>
            <person name="Bersano T."/>
            <person name="Bono H."/>
            <person name="Chalk A.M."/>
            <person name="Chiu K.P."/>
            <person name="Choudhary V."/>
            <person name="Christoffels A."/>
            <person name="Clutterbuck D.R."/>
            <person name="Crowe M.L."/>
            <person name="Dalla E."/>
            <person name="Dalrymple B.P."/>
            <person name="de Bono B."/>
            <person name="Della Gatta G."/>
            <person name="di Bernardo D."/>
            <person name="Down T."/>
            <person name="Engstrom P."/>
            <person name="Fagiolini M."/>
            <person name="Faulkner G."/>
            <person name="Fletcher C.F."/>
            <person name="Fukushima T."/>
            <person name="Furuno M."/>
            <person name="Futaki S."/>
            <person name="Gariboldi M."/>
            <person name="Georgii-Hemming P."/>
            <person name="Gingeras T.R."/>
            <person name="Gojobori T."/>
            <person name="Green R.E."/>
            <person name="Gustincich S."/>
            <person name="Harbers M."/>
            <person name="Hayashi Y."/>
            <person name="Hensch T.K."/>
            <person name="Hirokawa N."/>
            <person name="Hill D."/>
            <person name="Huminiecki L."/>
            <person name="Iacono M."/>
            <person name="Ikeo K."/>
            <person name="Iwama A."/>
            <person name="Ishikawa T."/>
            <person name="Jakt M."/>
            <person name="Kanapin A."/>
            <person name="Katoh M."/>
            <person name="Kawasawa Y."/>
            <person name="Kelso J."/>
            <person name="Kitamura H."/>
            <person name="Kitano H."/>
            <person name="Kollias G."/>
            <person name="Krishnan S.P."/>
            <person name="Kruger A."/>
            <person name="Kummerfeld S.K."/>
            <person name="Kurochkin I.V."/>
            <person name="Lareau L.F."/>
            <person name="Lazarevic D."/>
            <person name="Lipovich L."/>
            <person name="Liu J."/>
            <person name="Liuni S."/>
            <person name="McWilliam S."/>
            <person name="Madan Babu M."/>
            <person name="Madera M."/>
            <person name="Marchionni L."/>
            <person name="Matsuda H."/>
            <person name="Matsuzawa S."/>
            <person name="Miki H."/>
            <person name="Mignone F."/>
            <person name="Miyake S."/>
            <person name="Morris K."/>
            <person name="Mottagui-Tabar S."/>
            <person name="Mulder N."/>
            <person name="Nakano N."/>
            <person name="Nakauchi H."/>
            <person name="Ng P."/>
            <person name="Nilsson R."/>
            <person name="Nishiguchi S."/>
            <person name="Nishikawa S."/>
            <person name="Nori F."/>
            <person name="Ohara O."/>
            <person name="Okazaki Y."/>
            <person name="Orlando V."/>
            <person name="Pang K.C."/>
            <person name="Pavan W.J."/>
            <person name="Pavesi G."/>
            <person name="Pesole G."/>
            <person name="Petrovsky N."/>
            <person name="Piazza S."/>
            <person name="Reed J."/>
            <person name="Reid J.F."/>
            <person name="Ring B.Z."/>
            <person name="Ringwald M."/>
            <person name="Rost B."/>
            <person name="Ruan Y."/>
            <person name="Salzberg S.L."/>
            <person name="Sandelin A."/>
            <person name="Schneider C."/>
            <person name="Schoenbach C."/>
            <person name="Sekiguchi K."/>
            <person name="Semple C.A."/>
            <person name="Seno S."/>
            <person name="Sessa L."/>
            <person name="Sheng Y."/>
            <person name="Shibata Y."/>
            <person name="Shimada H."/>
            <person name="Shimada K."/>
            <person name="Silva D."/>
            <person name="Sinclair B."/>
            <person name="Sperling S."/>
            <person name="Stupka E."/>
            <person name="Sugiura K."/>
            <person name="Sultana R."/>
            <person name="Takenaka Y."/>
            <person name="Taki K."/>
            <person name="Tammoja K."/>
            <person name="Tan S.L."/>
            <person name="Tang S."/>
            <person name="Taylor M.S."/>
            <person name="Tegner J."/>
            <person name="Teichmann S.A."/>
            <person name="Ueda H.R."/>
            <person name="van Nimwegen E."/>
            <person name="Verardo R."/>
            <person name="Wei C.L."/>
            <person name="Yagi K."/>
            <person name="Yamanishi H."/>
            <person name="Zabarovsky E."/>
            <person name="Zhu S."/>
            <person name="Zimmer A."/>
            <person name="Hide W."/>
            <person name="Bult C."/>
            <person name="Grimmond S.M."/>
            <person name="Teasdale R.D."/>
            <person name="Liu E.T."/>
            <person name="Brusic V."/>
            <person name="Quackenbush J."/>
            <person name="Wahlestedt C."/>
            <person name="Mattick J.S."/>
            <person name="Hume D.A."/>
            <person name="Kai C."/>
            <person name="Sasaki D."/>
            <person name="Tomaru Y."/>
            <person name="Fukuda S."/>
            <person name="Kanamori-Katayama M."/>
            <person name="Suzuki M."/>
            <person name="Aoki J."/>
            <person name="Arakawa T."/>
            <person name="Iida J."/>
            <person name="Imamura K."/>
            <person name="Itoh M."/>
            <person name="Kato T."/>
            <person name="Kawaji H."/>
            <person name="Kawagashira N."/>
            <person name="Kawashima T."/>
            <person name="Kojima M."/>
            <person name="Kondo S."/>
            <person name="Konno H."/>
            <person name="Nakano K."/>
            <person name="Ninomiya N."/>
            <person name="Nishio T."/>
            <person name="Okada M."/>
            <person name="Plessy C."/>
            <person name="Shibata K."/>
            <person name="Shiraki T."/>
            <person name="Suzuki S."/>
            <person name="Tagami M."/>
            <person name="Waki K."/>
            <person name="Watahiki A."/>
            <person name="Okamura-Oho Y."/>
            <person name="Suzuki H."/>
            <person name="Kawai J."/>
            <person name="Hayashizaki Y."/>
        </authorList>
    </citation>
    <scope>NUCLEOTIDE SEQUENCE [LARGE SCALE MRNA]</scope>
    <source>
        <strain>C57BL/6J</strain>
        <strain>DBA/2J</strain>
        <tissue>Bone marrow</tissue>
        <tissue>Thymus</tissue>
    </source>
</reference>
<reference key="3">
    <citation type="journal article" date="2004" name="Genome Res.">
        <title>The status, quality, and expansion of the NIH full-length cDNA project: the Mammalian Gene Collection (MGC).</title>
        <authorList>
            <consortium name="The MGC Project Team"/>
        </authorList>
    </citation>
    <scope>NUCLEOTIDE SEQUENCE [LARGE SCALE MRNA]</scope>
    <source>
        <strain>C57BL/6J</strain>
        <tissue>Thymus</tissue>
    </source>
</reference>
<reference key="4">
    <citation type="journal article" date="2010" name="Cell">
        <title>A tissue-specific atlas of mouse protein phosphorylation and expression.</title>
        <authorList>
            <person name="Huttlin E.L."/>
            <person name="Jedrychowski M.P."/>
            <person name="Elias J.E."/>
            <person name="Goswami T."/>
            <person name="Rad R."/>
            <person name="Beausoleil S.A."/>
            <person name="Villen J."/>
            <person name="Haas W."/>
            <person name="Sowa M.E."/>
            <person name="Gygi S.P."/>
        </authorList>
    </citation>
    <scope>IDENTIFICATION BY MASS SPECTROMETRY [LARGE SCALE ANALYSIS]</scope>
    <source>
        <tissue>Brown adipose tissue</tissue>
        <tissue>Kidney</tissue>
        <tissue>Spleen</tissue>
    </source>
</reference>
<proteinExistence type="evidence at protein level"/>
<gene>
    <name type="primary">Mpv17l2</name>
    <name type="synonym">Fksg24</name>
</gene>
<name>M17L2_MOUSE</name>
<organism>
    <name type="scientific">Mus musculus</name>
    <name type="common">Mouse</name>
    <dbReference type="NCBI Taxonomy" id="10090"/>
    <lineage>
        <taxon>Eukaryota</taxon>
        <taxon>Metazoa</taxon>
        <taxon>Chordata</taxon>
        <taxon>Craniata</taxon>
        <taxon>Vertebrata</taxon>
        <taxon>Euteleostomi</taxon>
        <taxon>Mammalia</taxon>
        <taxon>Eutheria</taxon>
        <taxon>Euarchontoglires</taxon>
        <taxon>Glires</taxon>
        <taxon>Rodentia</taxon>
        <taxon>Myomorpha</taxon>
        <taxon>Muroidea</taxon>
        <taxon>Muridae</taxon>
        <taxon>Murinae</taxon>
        <taxon>Mus</taxon>
        <taxon>Mus</taxon>
    </lineage>
</organism>
<dbReference type="EMBL" id="AY013699">
    <property type="protein sequence ID" value="AAG38937.1"/>
    <property type="molecule type" value="mRNA"/>
</dbReference>
<dbReference type="EMBL" id="AK138901">
    <property type="protein sequence ID" value="BAE23813.1"/>
    <property type="molecule type" value="mRNA"/>
</dbReference>
<dbReference type="EMBL" id="AK151477">
    <property type="protein sequence ID" value="BAE30432.1"/>
    <property type="molecule type" value="mRNA"/>
</dbReference>
<dbReference type="EMBL" id="AK152031">
    <property type="protein sequence ID" value="BAE30890.1"/>
    <property type="molecule type" value="mRNA"/>
</dbReference>
<dbReference type="EMBL" id="AK168278">
    <property type="protein sequence ID" value="BAE40224.1"/>
    <property type="molecule type" value="mRNA"/>
</dbReference>
<dbReference type="EMBL" id="BC051227">
    <property type="protein sequence ID" value="AAH51227.1"/>
    <property type="molecule type" value="mRNA"/>
</dbReference>
<dbReference type="CCDS" id="CCDS22380.1"/>
<dbReference type="RefSeq" id="NP_898993.1">
    <property type="nucleotide sequence ID" value="NM_183170.2"/>
</dbReference>
<dbReference type="FunCoup" id="Q8VIK2">
    <property type="interactions" value="1115"/>
</dbReference>
<dbReference type="STRING" id="10090.ENSMUSP00000037929"/>
<dbReference type="iPTMnet" id="Q8VIK2"/>
<dbReference type="PhosphoSitePlus" id="Q8VIK2"/>
<dbReference type="PaxDb" id="10090-ENSMUSP00000037929"/>
<dbReference type="PeptideAtlas" id="Q8VIK2"/>
<dbReference type="ProteomicsDB" id="252696"/>
<dbReference type="Antibodypedia" id="51731">
    <property type="antibodies" value="29 antibodies from 15 providers"/>
</dbReference>
<dbReference type="DNASU" id="234384"/>
<dbReference type="Ensembl" id="ENSMUST00000038626.10">
    <property type="protein sequence ID" value="ENSMUSP00000037929.9"/>
    <property type="gene ID" value="ENSMUSG00000035559.10"/>
</dbReference>
<dbReference type="GeneID" id="234384"/>
<dbReference type="KEGG" id="mmu:234384"/>
<dbReference type="UCSC" id="uc009mbl.1">
    <property type="organism name" value="mouse"/>
</dbReference>
<dbReference type="AGR" id="MGI:2681846"/>
<dbReference type="CTD" id="84769"/>
<dbReference type="MGI" id="MGI:2681846">
    <property type="gene designation" value="Mpv17l2"/>
</dbReference>
<dbReference type="VEuPathDB" id="HostDB:ENSMUSG00000035559"/>
<dbReference type="eggNOG" id="KOG1944">
    <property type="taxonomic scope" value="Eukaryota"/>
</dbReference>
<dbReference type="GeneTree" id="ENSGT00940000160620"/>
<dbReference type="HOGENOM" id="CLU_049109_4_1_1"/>
<dbReference type="InParanoid" id="Q8VIK2"/>
<dbReference type="OMA" id="CAPTMIG"/>
<dbReference type="OrthoDB" id="10267969at2759"/>
<dbReference type="PhylomeDB" id="Q8VIK2"/>
<dbReference type="TreeFam" id="TF324392"/>
<dbReference type="BioGRID-ORCS" id="234384">
    <property type="hits" value="5 hits in 76 CRISPR screens"/>
</dbReference>
<dbReference type="ChiTaRS" id="Mpv17l2">
    <property type="organism name" value="mouse"/>
</dbReference>
<dbReference type="PRO" id="PR:Q8VIK2"/>
<dbReference type="Proteomes" id="UP000000589">
    <property type="component" value="Chromosome 8"/>
</dbReference>
<dbReference type="RNAct" id="Q8VIK2">
    <property type="molecule type" value="protein"/>
</dbReference>
<dbReference type="Bgee" id="ENSMUSG00000035559">
    <property type="expression patterns" value="Expressed in adrenal gland and 64 other cell types or tissues"/>
</dbReference>
<dbReference type="ExpressionAtlas" id="Q8VIK2">
    <property type="expression patterns" value="baseline and differential"/>
</dbReference>
<dbReference type="GO" id="GO:0005743">
    <property type="term" value="C:mitochondrial inner membrane"/>
    <property type="evidence" value="ECO:0000250"/>
    <property type="project" value="UniProtKB"/>
</dbReference>
<dbReference type="GO" id="GO:0005739">
    <property type="term" value="C:mitochondrion"/>
    <property type="evidence" value="ECO:0007005"/>
    <property type="project" value="MGI"/>
</dbReference>
<dbReference type="GO" id="GO:0140978">
    <property type="term" value="F:mitochondrial large ribosomal subunit binding"/>
    <property type="evidence" value="ECO:0007669"/>
    <property type="project" value="Ensembl"/>
</dbReference>
<dbReference type="GO" id="GO:0061668">
    <property type="term" value="P:mitochondrial ribosome assembly"/>
    <property type="evidence" value="ECO:0007669"/>
    <property type="project" value="Ensembl"/>
</dbReference>
<dbReference type="GO" id="GO:0070131">
    <property type="term" value="P:positive regulation of mitochondrial translation"/>
    <property type="evidence" value="ECO:0000250"/>
    <property type="project" value="UniProtKB"/>
</dbReference>
<dbReference type="InterPro" id="IPR007248">
    <property type="entry name" value="Mpv17_PMP22"/>
</dbReference>
<dbReference type="PANTHER" id="PTHR11266:SF8">
    <property type="entry name" value="MPV17-LIKE PROTEIN 2"/>
    <property type="match status" value="1"/>
</dbReference>
<dbReference type="PANTHER" id="PTHR11266">
    <property type="entry name" value="PEROXISOMAL MEMBRANE PROTEIN 2, PXMP2 MPV17"/>
    <property type="match status" value="1"/>
</dbReference>
<dbReference type="Pfam" id="PF04117">
    <property type="entry name" value="Mpv17_PMP22"/>
    <property type="match status" value="1"/>
</dbReference>
<accession>Q8VIK2</accession>
<accession>Q3THH2</accession>
<accession>Q80UR1</accession>